<proteinExistence type="inferred from homology"/>
<dbReference type="EC" id="3.1.13.5" evidence="1"/>
<dbReference type="EMBL" id="FN543093">
    <property type="protein sequence ID" value="CBA31565.1"/>
    <property type="status" value="ALT_INIT"/>
    <property type="molecule type" value="Genomic_DNA"/>
</dbReference>
<dbReference type="SMR" id="C9XUE4"/>
<dbReference type="KEGG" id="ctu:CTU_24800"/>
<dbReference type="PATRIC" id="fig|693216.3.peg.2350"/>
<dbReference type="HOGENOM" id="CLU_042387_0_1_6"/>
<dbReference type="Proteomes" id="UP000002069">
    <property type="component" value="Chromosome"/>
</dbReference>
<dbReference type="GO" id="GO:0005737">
    <property type="term" value="C:cytoplasm"/>
    <property type="evidence" value="ECO:0007669"/>
    <property type="project" value="UniProtKB-SubCell"/>
</dbReference>
<dbReference type="GO" id="GO:0008408">
    <property type="term" value="F:3'-5' exonuclease activity"/>
    <property type="evidence" value="ECO:0007669"/>
    <property type="project" value="InterPro"/>
</dbReference>
<dbReference type="GO" id="GO:0003676">
    <property type="term" value="F:nucleic acid binding"/>
    <property type="evidence" value="ECO:0007669"/>
    <property type="project" value="InterPro"/>
</dbReference>
<dbReference type="GO" id="GO:0000166">
    <property type="term" value="F:nucleotide binding"/>
    <property type="evidence" value="ECO:0007669"/>
    <property type="project" value="InterPro"/>
</dbReference>
<dbReference type="GO" id="GO:0033890">
    <property type="term" value="F:ribonuclease D activity"/>
    <property type="evidence" value="ECO:0007669"/>
    <property type="project" value="UniProtKB-UniRule"/>
</dbReference>
<dbReference type="GO" id="GO:0042780">
    <property type="term" value="P:tRNA 3'-end processing"/>
    <property type="evidence" value="ECO:0007669"/>
    <property type="project" value="UniProtKB-UniRule"/>
</dbReference>
<dbReference type="CDD" id="cd06142">
    <property type="entry name" value="RNaseD_exo"/>
    <property type="match status" value="1"/>
</dbReference>
<dbReference type="FunFam" id="1.10.150.80:FF:000007">
    <property type="entry name" value="Ribonuclease D"/>
    <property type="match status" value="1"/>
</dbReference>
<dbReference type="FunFam" id="3.30.420.10:FF:000060">
    <property type="entry name" value="Ribonuclease D"/>
    <property type="match status" value="1"/>
</dbReference>
<dbReference type="Gene3D" id="1.10.150.80">
    <property type="entry name" value="HRDC domain"/>
    <property type="match status" value="2"/>
</dbReference>
<dbReference type="Gene3D" id="3.30.420.10">
    <property type="entry name" value="Ribonuclease H-like superfamily/Ribonuclease H"/>
    <property type="match status" value="1"/>
</dbReference>
<dbReference type="HAMAP" id="MF_01899">
    <property type="entry name" value="RNase_D"/>
    <property type="match status" value="1"/>
</dbReference>
<dbReference type="InterPro" id="IPR002562">
    <property type="entry name" value="3'-5'_exonuclease_dom"/>
</dbReference>
<dbReference type="InterPro" id="IPR010997">
    <property type="entry name" value="HRDC-like_sf"/>
</dbReference>
<dbReference type="InterPro" id="IPR002121">
    <property type="entry name" value="HRDC_dom"/>
</dbReference>
<dbReference type="InterPro" id="IPR044876">
    <property type="entry name" value="HRDC_dom_sf"/>
</dbReference>
<dbReference type="InterPro" id="IPR006292">
    <property type="entry name" value="RNase_D"/>
</dbReference>
<dbReference type="InterPro" id="IPR051086">
    <property type="entry name" value="RNase_D-like"/>
</dbReference>
<dbReference type="InterPro" id="IPR048579">
    <property type="entry name" value="RNAseD_HRDC_C"/>
</dbReference>
<dbReference type="InterPro" id="IPR012337">
    <property type="entry name" value="RNaseH-like_sf"/>
</dbReference>
<dbReference type="InterPro" id="IPR036397">
    <property type="entry name" value="RNaseH_sf"/>
</dbReference>
<dbReference type="NCBIfam" id="NF008089">
    <property type="entry name" value="PRK10829.1"/>
    <property type="match status" value="1"/>
</dbReference>
<dbReference type="NCBIfam" id="TIGR01388">
    <property type="entry name" value="rnd"/>
    <property type="match status" value="1"/>
</dbReference>
<dbReference type="PANTHER" id="PTHR47649">
    <property type="entry name" value="RIBONUCLEASE D"/>
    <property type="match status" value="1"/>
</dbReference>
<dbReference type="PANTHER" id="PTHR47649:SF1">
    <property type="entry name" value="RIBONUCLEASE D"/>
    <property type="match status" value="1"/>
</dbReference>
<dbReference type="Pfam" id="PF01612">
    <property type="entry name" value="DNA_pol_A_exo1"/>
    <property type="match status" value="1"/>
</dbReference>
<dbReference type="Pfam" id="PF00570">
    <property type="entry name" value="HRDC"/>
    <property type="match status" value="1"/>
</dbReference>
<dbReference type="Pfam" id="PF21293">
    <property type="entry name" value="RNAseD_HRDC_C"/>
    <property type="match status" value="1"/>
</dbReference>
<dbReference type="SMART" id="SM00474">
    <property type="entry name" value="35EXOc"/>
    <property type="match status" value="1"/>
</dbReference>
<dbReference type="SMART" id="SM00341">
    <property type="entry name" value="HRDC"/>
    <property type="match status" value="1"/>
</dbReference>
<dbReference type="SUPFAM" id="SSF47819">
    <property type="entry name" value="HRDC-like"/>
    <property type="match status" value="2"/>
</dbReference>
<dbReference type="SUPFAM" id="SSF53098">
    <property type="entry name" value="Ribonuclease H-like"/>
    <property type="match status" value="1"/>
</dbReference>
<dbReference type="PROSITE" id="PS50967">
    <property type="entry name" value="HRDC"/>
    <property type="match status" value="1"/>
</dbReference>
<evidence type="ECO:0000255" key="1">
    <source>
        <dbReference type="HAMAP-Rule" id="MF_01899"/>
    </source>
</evidence>
<evidence type="ECO:0000305" key="2"/>
<protein>
    <recommendedName>
        <fullName evidence="1">Ribonuclease D</fullName>
        <shortName evidence="1">RNase D</shortName>
        <ecNumber evidence="1">3.1.13.5</ecNumber>
    </recommendedName>
</protein>
<gene>
    <name evidence="1" type="primary">rnd</name>
    <name type="ordered locus">Ctu_24800</name>
</gene>
<name>RND_CROTZ</name>
<feature type="chain" id="PRO_0000411060" description="Ribonuclease D">
    <location>
        <begin position="1"/>
        <end position="369"/>
    </location>
</feature>
<feature type="domain" description="3'-5' exonuclease" evidence="1">
    <location>
        <begin position="1"/>
        <end position="166"/>
    </location>
</feature>
<feature type="domain" description="HRDC" evidence="1">
    <location>
        <begin position="206"/>
        <end position="285"/>
    </location>
</feature>
<reference key="1">
    <citation type="journal article" date="2011" name="J. Bacteriol.">
        <title>Complete genome sequence of Cronobacter turicensis LMG 23827, a food-borne pathogen causing deaths in neonates.</title>
        <authorList>
            <person name="Stephan R."/>
            <person name="Lehner A."/>
            <person name="Tischler P."/>
            <person name="Rattei T."/>
        </authorList>
    </citation>
    <scope>NUCLEOTIDE SEQUENCE [LARGE SCALE GENOMIC DNA]</scope>
    <source>
        <strain>DSM 18703 / CCUG 55852 / LMG 23827 / z3032</strain>
    </source>
</reference>
<keyword id="KW-0963">Cytoplasm</keyword>
<keyword id="KW-0269">Exonuclease</keyword>
<keyword id="KW-0378">Hydrolase</keyword>
<keyword id="KW-0540">Nuclease</keyword>
<keyword id="KW-0819">tRNA processing</keyword>
<sequence length="369" mass="41859">MITTNDALAALCETARTQRALALDTEFVRTRTYYPQLGLIQLYDGENVALIDPLTITEWAPFQALLQDQNITKFLHAGSEDLEVFQNAFGMMPDPFIDTQVLASFVGHPLSCGFATLVEHHTGVALDKSESRTDWLARPLTERQCDYAAADVWYLLPIAHKLMEQVREAGWLTAAINECRLMTQRRGEVLDPDEAWREITNAWQLRPRQLACLKLLAGWRLRKARERDMAVNFVVREENLWKVARHMPGSLGELDGLGLSGSEIRFHGKTLLALVAQAQALLEDALPEPLANLVDMPGYRKVFKEIKALVQETSEAHKISAELMASRRQINQLLNWHWKLKPQNQLPELISGWRGELLGEALKTLLQNY</sequence>
<comment type="function">
    <text evidence="1">Exonuclease involved in the 3' processing of various precursor tRNAs. Initiates hydrolysis at the 3'-terminus of an RNA molecule and releases 5'-mononucleotides.</text>
</comment>
<comment type="catalytic activity">
    <reaction evidence="1">
        <text>Exonucleolytic cleavage that removes extra residues from the 3'-terminus of tRNA to produce 5'-mononucleotides.</text>
        <dbReference type="EC" id="3.1.13.5"/>
    </reaction>
</comment>
<comment type="cofactor">
    <cofactor evidence="1">
        <name>a divalent metal cation</name>
        <dbReference type="ChEBI" id="CHEBI:60240"/>
    </cofactor>
</comment>
<comment type="subcellular location">
    <subcellularLocation>
        <location evidence="1">Cytoplasm</location>
    </subcellularLocation>
</comment>
<comment type="similarity">
    <text evidence="1">Belongs to the RNase D family.</text>
</comment>
<comment type="sequence caution" evidence="2">
    <conflict type="erroneous initiation">
        <sequence resource="EMBL-CDS" id="CBA31565"/>
    </conflict>
    <text>Extended N-terminus.</text>
</comment>
<accession>C9XUE4</accession>
<organism>
    <name type="scientific">Cronobacter turicensis (strain DSM 18703 / CCUG 55852 / LMG 23827 / z3032)</name>
    <dbReference type="NCBI Taxonomy" id="693216"/>
    <lineage>
        <taxon>Bacteria</taxon>
        <taxon>Pseudomonadati</taxon>
        <taxon>Pseudomonadota</taxon>
        <taxon>Gammaproteobacteria</taxon>
        <taxon>Enterobacterales</taxon>
        <taxon>Enterobacteriaceae</taxon>
        <taxon>Cronobacter</taxon>
    </lineage>
</organism>